<reference key="1">
    <citation type="journal article" date="2009" name="J. Bacteriol.">
        <title>Complete and draft genome sequences of six members of the Aquificales.</title>
        <authorList>
            <person name="Reysenbach A.-L."/>
            <person name="Hamamura N."/>
            <person name="Podar M."/>
            <person name="Griffiths E."/>
            <person name="Ferreira S."/>
            <person name="Hochstein R."/>
            <person name="Heidelberg J."/>
            <person name="Johnson J."/>
            <person name="Mead D."/>
            <person name="Pohorille A."/>
            <person name="Sarmiento M."/>
            <person name="Schweighofer K."/>
            <person name="Seshadri R."/>
            <person name="Voytek M.A."/>
        </authorList>
    </citation>
    <scope>NUCLEOTIDE SEQUENCE [LARGE SCALE GENOMIC DNA]</scope>
    <source>
        <strain>Y04AAS1</strain>
    </source>
</reference>
<gene>
    <name evidence="1" type="primary">leuD</name>
    <name type="ordered locus">HY04AAS1_0441</name>
</gene>
<name>LEUD_HYDS0</name>
<organism>
    <name type="scientific">Hydrogenobaculum sp. (strain Y04AAS1)</name>
    <dbReference type="NCBI Taxonomy" id="380749"/>
    <lineage>
        <taxon>Bacteria</taxon>
        <taxon>Pseudomonadati</taxon>
        <taxon>Aquificota</taxon>
        <taxon>Aquificia</taxon>
        <taxon>Aquificales</taxon>
        <taxon>Aquificaceae</taxon>
        <taxon>Hydrogenobaculum</taxon>
    </lineage>
</organism>
<comment type="function">
    <text evidence="1">Catalyzes the isomerization between 2-isopropylmalate and 3-isopropylmalate, via the formation of 2-isopropylmaleate.</text>
</comment>
<comment type="catalytic activity">
    <reaction evidence="1">
        <text>(2R,3S)-3-isopropylmalate = (2S)-2-isopropylmalate</text>
        <dbReference type="Rhea" id="RHEA:32287"/>
        <dbReference type="ChEBI" id="CHEBI:1178"/>
        <dbReference type="ChEBI" id="CHEBI:35121"/>
        <dbReference type="EC" id="4.2.1.33"/>
    </reaction>
</comment>
<comment type="pathway">
    <text evidence="1">Amino-acid biosynthesis; L-leucine biosynthesis; L-leucine from 3-methyl-2-oxobutanoate: step 2/4.</text>
</comment>
<comment type="subunit">
    <text evidence="1">Heterodimer of LeuC and LeuD.</text>
</comment>
<comment type="similarity">
    <text evidence="1">Belongs to the LeuD family. LeuD type 2 subfamily.</text>
</comment>
<sequence>MIIKGKIWKFKDNIDTDQIIPARYLNTSDPLELASHVMEDSEKPNFAKEHQEGDIIVAGKNFGSGSSREHAPIAIKYAGVPVVVAKSFARIFFRNAINIGLPIVECKEAVDEAEDGDIFEIDLENGIVKNVTKNKTYSSTKFPEELMAILRAGGLMEYAKSRLSS</sequence>
<proteinExistence type="inferred from homology"/>
<keyword id="KW-0028">Amino-acid biosynthesis</keyword>
<keyword id="KW-0100">Branched-chain amino acid biosynthesis</keyword>
<keyword id="KW-0432">Leucine biosynthesis</keyword>
<keyword id="KW-0456">Lyase</keyword>
<feature type="chain" id="PRO_1000135850" description="3-isopropylmalate dehydratase small subunit">
    <location>
        <begin position="1"/>
        <end position="165"/>
    </location>
</feature>
<accession>B4U7M0</accession>
<evidence type="ECO:0000255" key="1">
    <source>
        <dbReference type="HAMAP-Rule" id="MF_01032"/>
    </source>
</evidence>
<protein>
    <recommendedName>
        <fullName evidence="1">3-isopropylmalate dehydratase small subunit</fullName>
        <ecNumber evidence="1">4.2.1.33</ecNumber>
    </recommendedName>
    <alternativeName>
        <fullName evidence="1">Alpha-IPM isomerase</fullName>
        <shortName evidence="1">IPMI</shortName>
    </alternativeName>
    <alternativeName>
        <fullName evidence="1">Isopropylmalate isomerase</fullName>
    </alternativeName>
</protein>
<dbReference type="EC" id="4.2.1.33" evidence="1"/>
<dbReference type="EMBL" id="CP001130">
    <property type="protein sequence ID" value="ACG57131.1"/>
    <property type="molecule type" value="Genomic_DNA"/>
</dbReference>
<dbReference type="RefSeq" id="WP_012513487.1">
    <property type="nucleotide sequence ID" value="NC_011126.1"/>
</dbReference>
<dbReference type="SMR" id="B4U7M0"/>
<dbReference type="STRING" id="380749.HY04AAS1_0441"/>
<dbReference type="KEGG" id="hya:HY04AAS1_0441"/>
<dbReference type="eggNOG" id="COG0066">
    <property type="taxonomic scope" value="Bacteria"/>
</dbReference>
<dbReference type="HOGENOM" id="CLU_081378_1_1_0"/>
<dbReference type="OrthoDB" id="9777465at2"/>
<dbReference type="UniPathway" id="UPA00048">
    <property type="reaction ID" value="UER00071"/>
</dbReference>
<dbReference type="GO" id="GO:0003861">
    <property type="term" value="F:3-isopropylmalate dehydratase activity"/>
    <property type="evidence" value="ECO:0007669"/>
    <property type="project" value="UniProtKB-UniRule"/>
</dbReference>
<dbReference type="GO" id="GO:0009098">
    <property type="term" value="P:L-leucine biosynthetic process"/>
    <property type="evidence" value="ECO:0007669"/>
    <property type="project" value="UniProtKB-UniRule"/>
</dbReference>
<dbReference type="CDD" id="cd01577">
    <property type="entry name" value="IPMI_Swivel"/>
    <property type="match status" value="1"/>
</dbReference>
<dbReference type="FunFam" id="3.20.19.10:FF:000007">
    <property type="entry name" value="Isopropylmalate/citramalate isomerase small subunit"/>
    <property type="match status" value="1"/>
</dbReference>
<dbReference type="Gene3D" id="3.20.19.10">
    <property type="entry name" value="Aconitase, domain 4"/>
    <property type="match status" value="1"/>
</dbReference>
<dbReference type="HAMAP" id="MF_01032">
    <property type="entry name" value="LeuD_type2"/>
    <property type="match status" value="1"/>
</dbReference>
<dbReference type="InterPro" id="IPR015928">
    <property type="entry name" value="Aconitase/3IPM_dehydase_swvl"/>
</dbReference>
<dbReference type="InterPro" id="IPR000573">
    <property type="entry name" value="AconitaseA/IPMdHydase_ssu_swvl"/>
</dbReference>
<dbReference type="InterPro" id="IPR033940">
    <property type="entry name" value="IPMI_Swivel"/>
</dbReference>
<dbReference type="InterPro" id="IPR050075">
    <property type="entry name" value="LeuD"/>
</dbReference>
<dbReference type="InterPro" id="IPR011824">
    <property type="entry name" value="LeuD/DmdB_bac"/>
</dbReference>
<dbReference type="InterPro" id="IPR011827">
    <property type="entry name" value="LeuD_type2/HacB/DmdB"/>
</dbReference>
<dbReference type="NCBIfam" id="TIGR02084">
    <property type="entry name" value="leud"/>
    <property type="match status" value="1"/>
</dbReference>
<dbReference type="NCBIfam" id="TIGR02087">
    <property type="entry name" value="LEUD_arch"/>
    <property type="match status" value="1"/>
</dbReference>
<dbReference type="PANTHER" id="PTHR43345:SF2">
    <property type="entry name" value="3-ISOPROPYLMALATE DEHYDRATASE SMALL SUBUNIT 1"/>
    <property type="match status" value="1"/>
</dbReference>
<dbReference type="PANTHER" id="PTHR43345">
    <property type="entry name" value="3-ISOPROPYLMALATE DEHYDRATASE SMALL SUBUNIT 2-RELATED-RELATED"/>
    <property type="match status" value="1"/>
</dbReference>
<dbReference type="Pfam" id="PF00694">
    <property type="entry name" value="Aconitase_C"/>
    <property type="match status" value="1"/>
</dbReference>
<dbReference type="SUPFAM" id="SSF52016">
    <property type="entry name" value="LeuD/IlvD-like"/>
    <property type="match status" value="1"/>
</dbReference>